<accession>Q92IS3</accession>
<organism>
    <name type="scientific">Rickettsia conorii (strain ATCC VR-613 / Malish 7)</name>
    <dbReference type="NCBI Taxonomy" id="272944"/>
    <lineage>
        <taxon>Bacteria</taxon>
        <taxon>Pseudomonadati</taxon>
        <taxon>Pseudomonadota</taxon>
        <taxon>Alphaproteobacteria</taxon>
        <taxon>Rickettsiales</taxon>
        <taxon>Rickettsiaceae</taxon>
        <taxon>Rickettsieae</taxon>
        <taxon>Rickettsia</taxon>
        <taxon>spotted fever group</taxon>
    </lineage>
</organism>
<gene>
    <name type="primary">pdhA</name>
    <name type="ordered locus">RC0347</name>
</gene>
<feature type="chain" id="PRO_0000162203" description="Pyruvate dehydrogenase E1 component subunit alpha">
    <location>
        <begin position="1"/>
        <end position="326"/>
    </location>
</feature>
<comment type="function">
    <text evidence="1">The pyruvate dehydrogenase complex catalyzes the overall conversion of pyruvate to acetyl-CoA and CO(2). It contains multiple copies of three enzymatic components: pyruvate dehydrogenase (E1), dihydrolipoamide acetyltransferase (E2) and lipoamide dehydrogenase (E3) (By similarity).</text>
</comment>
<comment type="catalytic activity">
    <reaction>
        <text>N(6)-[(R)-lipoyl]-L-lysyl-[protein] + pyruvate + H(+) = N(6)-[(R)-S(8)-acetyldihydrolipoyl]-L-lysyl-[protein] + CO2</text>
        <dbReference type="Rhea" id="RHEA:19189"/>
        <dbReference type="Rhea" id="RHEA-COMP:10474"/>
        <dbReference type="Rhea" id="RHEA-COMP:10478"/>
        <dbReference type="ChEBI" id="CHEBI:15361"/>
        <dbReference type="ChEBI" id="CHEBI:15378"/>
        <dbReference type="ChEBI" id="CHEBI:16526"/>
        <dbReference type="ChEBI" id="CHEBI:83099"/>
        <dbReference type="ChEBI" id="CHEBI:83111"/>
        <dbReference type="EC" id="1.2.4.1"/>
    </reaction>
</comment>
<comment type="cofactor">
    <cofactor evidence="1">
        <name>thiamine diphosphate</name>
        <dbReference type="ChEBI" id="CHEBI:58937"/>
    </cofactor>
</comment>
<comment type="subunit">
    <text>Heterodimer of an alpha and a beta chain.</text>
</comment>
<evidence type="ECO:0000250" key="1"/>
<dbReference type="EC" id="1.2.4.1"/>
<dbReference type="EMBL" id="AE006914">
    <property type="protein sequence ID" value="AAL02885.1"/>
    <property type="molecule type" value="Genomic_DNA"/>
</dbReference>
<dbReference type="PIR" id="C97743">
    <property type="entry name" value="C97743"/>
</dbReference>
<dbReference type="RefSeq" id="WP_010977002.1">
    <property type="nucleotide sequence ID" value="NC_003103.1"/>
</dbReference>
<dbReference type="SMR" id="Q92IS3"/>
<dbReference type="GeneID" id="927514"/>
<dbReference type="KEGG" id="rco:RC0347"/>
<dbReference type="PATRIC" id="fig|272944.4.peg.395"/>
<dbReference type="HOGENOM" id="CLU_029393_5_0_5"/>
<dbReference type="Proteomes" id="UP000000816">
    <property type="component" value="Chromosome"/>
</dbReference>
<dbReference type="GO" id="GO:0043231">
    <property type="term" value="C:intracellular membrane-bounded organelle"/>
    <property type="evidence" value="ECO:0007669"/>
    <property type="project" value="InterPro"/>
</dbReference>
<dbReference type="GO" id="GO:0004739">
    <property type="term" value="F:pyruvate dehydrogenase (acetyl-transferring) activity"/>
    <property type="evidence" value="ECO:0007669"/>
    <property type="project" value="UniProtKB-EC"/>
</dbReference>
<dbReference type="GO" id="GO:0006086">
    <property type="term" value="P:pyruvate decarboxylation to acetyl-CoA"/>
    <property type="evidence" value="ECO:0007669"/>
    <property type="project" value="InterPro"/>
</dbReference>
<dbReference type="CDD" id="cd02000">
    <property type="entry name" value="TPP_E1_PDC_ADC_BCADC"/>
    <property type="match status" value="1"/>
</dbReference>
<dbReference type="FunFam" id="3.40.50.970:FF:000013">
    <property type="entry name" value="Pyruvate dehydrogenase E1 component subunit alpha"/>
    <property type="match status" value="1"/>
</dbReference>
<dbReference type="Gene3D" id="3.40.50.970">
    <property type="match status" value="1"/>
</dbReference>
<dbReference type="InterPro" id="IPR001017">
    <property type="entry name" value="DH_E1"/>
</dbReference>
<dbReference type="InterPro" id="IPR050642">
    <property type="entry name" value="PDH_E1_Alpha_Subunit"/>
</dbReference>
<dbReference type="InterPro" id="IPR017597">
    <property type="entry name" value="Pyrv_DH_E1_asu_subgrp-y"/>
</dbReference>
<dbReference type="InterPro" id="IPR029061">
    <property type="entry name" value="THDP-binding"/>
</dbReference>
<dbReference type="NCBIfam" id="TIGR03182">
    <property type="entry name" value="PDH_E1_alph_y"/>
    <property type="match status" value="1"/>
</dbReference>
<dbReference type="PANTHER" id="PTHR11516:SF60">
    <property type="entry name" value="PYRUVATE DEHYDROGENASE E1 COMPONENT SUBUNIT ALPHA"/>
    <property type="match status" value="1"/>
</dbReference>
<dbReference type="PANTHER" id="PTHR11516">
    <property type="entry name" value="PYRUVATE DEHYDROGENASE E1 COMPONENT, ALPHA SUBUNIT BACTERIAL AND ORGANELLAR"/>
    <property type="match status" value="1"/>
</dbReference>
<dbReference type="Pfam" id="PF00676">
    <property type="entry name" value="E1_dh"/>
    <property type="match status" value="1"/>
</dbReference>
<dbReference type="SUPFAM" id="SSF52518">
    <property type="entry name" value="Thiamin diphosphate-binding fold (THDP-binding)"/>
    <property type="match status" value="1"/>
</dbReference>
<reference key="1">
    <citation type="journal article" date="2001" name="Science">
        <title>Mechanisms of evolution in Rickettsia conorii and R. prowazekii.</title>
        <authorList>
            <person name="Ogata H."/>
            <person name="Audic S."/>
            <person name="Renesto-Audiffren P."/>
            <person name="Fournier P.-E."/>
            <person name="Barbe V."/>
            <person name="Samson D."/>
            <person name="Roux V."/>
            <person name="Cossart P."/>
            <person name="Weissenbach J."/>
            <person name="Claverie J.-M."/>
            <person name="Raoult D."/>
        </authorList>
    </citation>
    <scope>NUCLEOTIDE SEQUENCE [LARGE SCALE GENOMIC DNA]</scope>
    <source>
        <strain>ATCC VR-613 / Malish 7</strain>
    </source>
</reference>
<protein>
    <recommendedName>
        <fullName>Pyruvate dehydrogenase E1 component subunit alpha</fullName>
        <ecNumber>1.2.4.1</ecNumber>
    </recommendedName>
</protein>
<name>ODPA_RICCN</name>
<sequence length="326" mass="36736">MDIKLGKYKPTKEEYIKSFKDMLLLRRFEEKCGQLYGMGEIGGFCHLYIGQEAVISAIDMVKQKGDSTITSYRDHAHIILAGTEPKYVLAELMGRATGCSKGKGGSMHLFNVPNKFYGGHGIVGAQVPIGTGLAFVEKYNDTHNICFTFLGDGAVNQGQVYEAFNMAALWGLPVVYIIENNEYSMGTSVARSTFMRDLYKKGASFGIKGFQLDGMDFEEMYDGSKQAAEYVRENSFPLILEVKTYRYRGHSMSDPAKYRSKEEVEQYKERDPLVIIRKTILDNKYVTEADLKAIEQSVKEIVKEAVEFSENSPLPDEGELYTQVYC</sequence>
<proteinExistence type="inferred from homology"/>
<keyword id="KW-0560">Oxidoreductase</keyword>
<keyword id="KW-0670">Pyruvate</keyword>
<keyword id="KW-0786">Thiamine pyrophosphate</keyword>